<comment type="function">
    <text evidence="1">DNA-dependent RNA polymerase catalyzes the transcription of DNA into RNA using the four ribonucleoside triphosphates as substrates.</text>
</comment>
<comment type="catalytic activity">
    <reaction evidence="1">
        <text>RNA(n) + a ribonucleoside 5'-triphosphate = RNA(n+1) + diphosphate</text>
        <dbReference type="Rhea" id="RHEA:21248"/>
        <dbReference type="Rhea" id="RHEA-COMP:14527"/>
        <dbReference type="Rhea" id="RHEA-COMP:17342"/>
        <dbReference type="ChEBI" id="CHEBI:33019"/>
        <dbReference type="ChEBI" id="CHEBI:61557"/>
        <dbReference type="ChEBI" id="CHEBI:140395"/>
        <dbReference type="EC" id="2.7.7.6"/>
    </reaction>
</comment>
<comment type="cofactor">
    <cofactor evidence="1">
        <name>Zn(2+)</name>
        <dbReference type="ChEBI" id="CHEBI:29105"/>
    </cofactor>
    <text evidence="1">Binds 1 Zn(2+) ion per subunit.</text>
</comment>
<comment type="subunit">
    <text evidence="1">In plastids the minimal PEP RNA polymerase catalytic core is composed of four subunits: alpha, beta, beta', and beta''. When a (nuclear-encoded) sigma factor is associated with the core the holoenzyme is formed, which can initiate transcription.</text>
</comment>
<comment type="subcellular location">
    <subcellularLocation>
        <location>Plastid</location>
    </subcellularLocation>
</comment>
<comment type="similarity">
    <text evidence="1">Belongs to the RNA polymerase beta' chain family. RpoC2 subfamily.</text>
</comment>
<comment type="caution">
    <text evidence="3">Young tissue from this organism is photosynthetic and contains some thylakoids, although the photosynthetic activity does not exceed the light compensation point.</text>
</comment>
<dbReference type="EC" id="2.7.7.6" evidence="1"/>
<dbReference type="EMBL" id="EU189132">
    <property type="protein sequence ID" value="ABW83685.1"/>
    <property type="molecule type" value="Genomic_DNA"/>
</dbReference>
<dbReference type="RefSeq" id="YP_001542521.1">
    <property type="nucleotide sequence ID" value="NC_009963.1"/>
</dbReference>
<dbReference type="SMR" id="A8W3B4"/>
<dbReference type="GeneID" id="5729574"/>
<dbReference type="GO" id="GO:0000428">
    <property type="term" value="C:DNA-directed RNA polymerase complex"/>
    <property type="evidence" value="ECO:0007669"/>
    <property type="project" value="UniProtKB-KW"/>
</dbReference>
<dbReference type="GO" id="GO:0005739">
    <property type="term" value="C:mitochondrion"/>
    <property type="evidence" value="ECO:0007669"/>
    <property type="project" value="GOC"/>
</dbReference>
<dbReference type="GO" id="GO:0009536">
    <property type="term" value="C:plastid"/>
    <property type="evidence" value="ECO:0007669"/>
    <property type="project" value="UniProtKB-SubCell"/>
</dbReference>
<dbReference type="GO" id="GO:0003677">
    <property type="term" value="F:DNA binding"/>
    <property type="evidence" value="ECO:0007669"/>
    <property type="project" value="InterPro"/>
</dbReference>
<dbReference type="GO" id="GO:0003899">
    <property type="term" value="F:DNA-directed RNA polymerase activity"/>
    <property type="evidence" value="ECO:0007669"/>
    <property type="project" value="UniProtKB-EC"/>
</dbReference>
<dbReference type="GO" id="GO:0046872">
    <property type="term" value="F:metal ion binding"/>
    <property type="evidence" value="ECO:0007669"/>
    <property type="project" value="UniProtKB-KW"/>
</dbReference>
<dbReference type="GO" id="GO:0006351">
    <property type="term" value="P:DNA-templated transcription"/>
    <property type="evidence" value="ECO:0007669"/>
    <property type="project" value="InterPro"/>
</dbReference>
<dbReference type="CDD" id="cd02655">
    <property type="entry name" value="RNAP_beta'_C"/>
    <property type="match status" value="1"/>
</dbReference>
<dbReference type="FunFam" id="1.10.132.30:FF:000002">
    <property type="entry name" value="DNA-directed RNA polymerase subunit beta"/>
    <property type="match status" value="1"/>
</dbReference>
<dbReference type="Gene3D" id="1.10.132.30">
    <property type="match status" value="1"/>
</dbReference>
<dbReference type="Gene3D" id="1.10.150.390">
    <property type="match status" value="1"/>
</dbReference>
<dbReference type="Gene3D" id="1.10.1790.20">
    <property type="match status" value="1"/>
</dbReference>
<dbReference type="Gene3D" id="1.10.274.100">
    <property type="entry name" value="RNA polymerase Rpb1, domain 3"/>
    <property type="match status" value="1"/>
</dbReference>
<dbReference type="HAMAP" id="MF_01324">
    <property type="entry name" value="RNApol_bact_RpoC2"/>
    <property type="match status" value="1"/>
</dbReference>
<dbReference type="InterPro" id="IPR012756">
    <property type="entry name" value="DNA-dir_RpoC2_beta_pp"/>
</dbReference>
<dbReference type="InterPro" id="IPR050254">
    <property type="entry name" value="RNA_pol_beta''_euk"/>
</dbReference>
<dbReference type="InterPro" id="IPR042102">
    <property type="entry name" value="RNA_pol_Rpb1_3_sf"/>
</dbReference>
<dbReference type="InterPro" id="IPR007083">
    <property type="entry name" value="RNA_pol_Rpb1_4"/>
</dbReference>
<dbReference type="InterPro" id="IPR007081">
    <property type="entry name" value="RNA_pol_Rpb1_5"/>
</dbReference>
<dbReference type="InterPro" id="IPR038120">
    <property type="entry name" value="Rpb1_funnel_sf"/>
</dbReference>
<dbReference type="NCBIfam" id="TIGR02388">
    <property type="entry name" value="rpoC2_cyan"/>
    <property type="match status" value="1"/>
</dbReference>
<dbReference type="PANTHER" id="PTHR34995">
    <property type="entry name" value="DNA-DIRECTED RNA POLYMERASE SUBUNIT BETA"/>
    <property type="match status" value="1"/>
</dbReference>
<dbReference type="PANTHER" id="PTHR34995:SF1">
    <property type="entry name" value="DNA-DIRECTED RNA POLYMERASE SUBUNIT BETA"/>
    <property type="match status" value="1"/>
</dbReference>
<dbReference type="Pfam" id="PF05000">
    <property type="entry name" value="RNA_pol_Rpb1_4"/>
    <property type="match status" value="1"/>
</dbReference>
<dbReference type="Pfam" id="PF04998">
    <property type="entry name" value="RNA_pol_Rpb1_5"/>
    <property type="match status" value="2"/>
</dbReference>
<dbReference type="SUPFAM" id="SSF64484">
    <property type="entry name" value="beta and beta-prime subunits of DNA dependent RNA-polymerase"/>
    <property type="match status" value="1"/>
</dbReference>
<reference key="1">
    <citation type="journal article" date="2007" name="BMC Plant Biol.">
        <title>Complete plastid genome sequences suggest strong selection for retention of photosynthetic genes in the parasitic plant genus Cuscuta.</title>
        <authorList>
            <person name="McNeal J.R."/>
            <person name="Kuehl J.V."/>
            <person name="Boore J.L."/>
            <person name="dePamphilis C.W."/>
        </authorList>
    </citation>
    <scope>NUCLEOTIDE SEQUENCE [LARGE SCALE GENOMIC DNA]</scope>
</reference>
<sequence>MEVLMAERINLVFHNKVLDRTAMKRLISRLIDHFGMAYTSHILDQVKTLGFQQATATSISLGIDDLLTIPSKGWLVQDAEQQSFIFEKYHHYGNVHAVEKLRQSIEIWYATSEYLRQEMNLNFRMTDPLNPVHLMYFSGARGNASQVHQLVGMRGLMSDPQGQMIDLPIQSNLREGLSLTEYIISCYGARKGVVDTAVRTSDAGYLTRRLVEVVQHIVVRRTDCGTARGISVSPHNGMMPERMFIQTLIGRVLADDIYIGPRCIATRNQNIGVGLVNRFLNFRAEPILIRTPLTCRSTSWICRLCYGRSPTHGDLVELGEAVGIIAGQSIGEPGTQLTLRTFHTGGVFTGGTAEHVRAPSNGKIRLNEDLVHPTRTRHGYPAFFCSIYLYVTIESQDILHHVKIPPKSFILVQNDQYVESEQVIAESRAGTSTFNYKEKVRKHIYSDSGGEMHWSTNVYHAPEFTYGNVHLLSKTSHLWILLGEPCHSSLVSTSIHRDQDQMSVQSLSVKRRSTSKLSETNDEANQEIASADFSGKKEDRIADFSDVNRSICTDHYNLVYPAILPILDENSSFFSNCLSKRRRNQFIIPLQSIQEHKNELMPCSSISMKTPPNANGIFWANSILAYFDDPRYRRNNSGSTKYGTLEMHSTVKKEDFIKYRGVNEFRQKMKVERFFFIPEEVHILPGSSSIMVRNHSLIGVDTQITLNLRSRVGGLVRVERKKKIIELKIFFGDIYFPGGADNISQHSGVLIPPGTERKTNYKESKKVKSWIDVQRITPSKKKFFVLVRPVVTYEIMDDITSATLFPPDLLQQRDNAQLRVVNYILHGTGKPIRGNYDTSIQLVRTCLVFKRNQDKKSYYSEAARASVVEIRTNYLIRHFLRIDFVKAPISYIGKRNDPLGLGLLADNGLDWTHKNPYSEARIHQNLNQNQGTIHTFLNRNKESQSLSILSSSNCSRMDPANGAKSNNVIQESKKEEYPILKISNSLGPLGTYPPIANCDSLNHLLTHNQILVTNYFKLDNVKPPFQVFKLKYYFIAENWKVCNYNPGSNLRLNVFDFHWNFLHHNSCAETSKIMSLGQFICQNVCIDKTRPPRKSGQVILVQVDSVVIRLAKPYLATPGATVHGLYGETFFGGDTVVTFNYEKSISGDITQGLPKVEQVLEVRSVDSISMNLEGRVEGWSKCITGILGIPWGFFIGAELTIVQSRISLVNKIQKVYRAQGVHIHNRHIEIIVRQITSKVLVSEDGMSNVFSPGELIGLLRAERTGRALEEPIHYRSVFLGITKASLNTQSFISEASFQETARVLSKAALGGRIDWLKGLKENVVLGGVIPAGTGFRGLVDPSKQYKTIPLKTNLFEGGMRDLLVHHRKLFDSFLNTSPS</sequence>
<keyword id="KW-0240">DNA-directed RNA polymerase</keyword>
<keyword id="KW-0479">Metal-binding</keyword>
<keyword id="KW-0548">Nucleotidyltransferase</keyword>
<keyword id="KW-0934">Plastid</keyword>
<keyword id="KW-0804">Transcription</keyword>
<keyword id="KW-0808">Transferase</keyword>
<keyword id="KW-0862">Zinc</keyword>
<organism>
    <name type="scientific">Cuscuta exaltata</name>
    <name type="common">Tall dodder</name>
    <dbReference type="NCBI Taxonomy" id="476139"/>
    <lineage>
        <taxon>Eukaryota</taxon>
        <taxon>Viridiplantae</taxon>
        <taxon>Streptophyta</taxon>
        <taxon>Embryophyta</taxon>
        <taxon>Tracheophyta</taxon>
        <taxon>Spermatophyta</taxon>
        <taxon>Magnoliopsida</taxon>
        <taxon>eudicotyledons</taxon>
        <taxon>Gunneridae</taxon>
        <taxon>Pentapetalae</taxon>
        <taxon>asterids</taxon>
        <taxon>lamiids</taxon>
        <taxon>Solanales</taxon>
        <taxon>Convolvulaceae</taxon>
        <taxon>Cuscuteae</taxon>
        <taxon>Cuscuta</taxon>
        <taxon>Cuscuta subgen. Monogynella</taxon>
    </lineage>
</organism>
<gene>
    <name evidence="1" type="primary">rpoC2</name>
</gene>
<protein>
    <recommendedName>
        <fullName evidence="1">DNA-directed RNA polymerase subunit beta''</fullName>
        <ecNumber evidence="1">2.7.7.6</ecNumber>
    </recommendedName>
    <alternativeName>
        <fullName evidence="1">PEP</fullName>
    </alternativeName>
    <alternativeName>
        <fullName evidence="1">Plastid-encoded RNA polymerase subunit beta''</fullName>
        <shortName evidence="1">RNA polymerase subunit beta''</shortName>
    </alternativeName>
</protein>
<feature type="chain" id="PRO_0000353556" description="DNA-directed RNA polymerase subunit beta''">
    <location>
        <begin position="1"/>
        <end position="1379"/>
    </location>
</feature>
<feature type="region of interest" description="Disordered" evidence="2">
    <location>
        <begin position="503"/>
        <end position="524"/>
    </location>
</feature>
<feature type="binding site" evidence="1">
    <location>
        <position position="224"/>
    </location>
    <ligand>
        <name>Zn(2+)</name>
        <dbReference type="ChEBI" id="CHEBI:29105"/>
    </ligand>
</feature>
<feature type="binding site" evidence="1">
    <location>
        <position position="295"/>
    </location>
    <ligand>
        <name>Zn(2+)</name>
        <dbReference type="ChEBI" id="CHEBI:29105"/>
    </ligand>
</feature>
<feature type="binding site" evidence="1">
    <location>
        <position position="302"/>
    </location>
    <ligand>
        <name>Zn(2+)</name>
        <dbReference type="ChEBI" id="CHEBI:29105"/>
    </ligand>
</feature>
<feature type="binding site" evidence="1">
    <location>
        <position position="305"/>
    </location>
    <ligand>
        <name>Zn(2+)</name>
        <dbReference type="ChEBI" id="CHEBI:29105"/>
    </ligand>
</feature>
<accession>A8W3B4</accession>
<proteinExistence type="inferred from homology"/>
<name>RPOC2_CUSEX</name>
<evidence type="ECO:0000255" key="1">
    <source>
        <dbReference type="HAMAP-Rule" id="MF_01324"/>
    </source>
</evidence>
<evidence type="ECO:0000256" key="2">
    <source>
        <dbReference type="SAM" id="MobiDB-lite"/>
    </source>
</evidence>
<evidence type="ECO:0000305" key="3"/>
<geneLocation type="plastid"/>